<sequence length="159" mass="18838">MIDPDGFRPNVGIILTNDAGQVLWARRINQDAWQFPQGGINPDETPEDALYRELNEEVGLERDDVEILACTRGWLRYRLPQRLVRTHSQPLCIGQKQKWFLLRLVSNEQRVRMDLTGKPEFDGWRWVSYWYPLGQVVTFKREVYRRALKELAPRLLTRD</sequence>
<evidence type="ECO:0000255" key="1">
    <source>
        <dbReference type="HAMAP-Rule" id="MF_00298"/>
    </source>
</evidence>
<name>RPPH_PSEPG</name>
<gene>
    <name evidence="1" type="primary">rppH</name>
    <name evidence="1" type="synonym">nudH</name>
    <name type="ordered locus">PputGB1_5199</name>
</gene>
<protein>
    <recommendedName>
        <fullName evidence="1">RNA pyrophosphohydrolase</fullName>
        <ecNumber evidence="1">3.6.1.-</ecNumber>
    </recommendedName>
    <alternativeName>
        <fullName evidence="1">(Di)nucleoside polyphosphate hydrolase</fullName>
    </alternativeName>
</protein>
<organism>
    <name type="scientific">Pseudomonas putida (strain GB-1)</name>
    <dbReference type="NCBI Taxonomy" id="76869"/>
    <lineage>
        <taxon>Bacteria</taxon>
        <taxon>Pseudomonadati</taxon>
        <taxon>Pseudomonadota</taxon>
        <taxon>Gammaproteobacteria</taxon>
        <taxon>Pseudomonadales</taxon>
        <taxon>Pseudomonadaceae</taxon>
        <taxon>Pseudomonas</taxon>
    </lineage>
</organism>
<accession>B0KP24</accession>
<keyword id="KW-0378">Hydrolase</keyword>
<dbReference type="EC" id="3.6.1.-" evidence="1"/>
<dbReference type="EMBL" id="CP000926">
    <property type="protein sequence ID" value="ABZ01082.1"/>
    <property type="molecule type" value="Genomic_DNA"/>
</dbReference>
<dbReference type="RefSeq" id="WP_003249017.1">
    <property type="nucleotide sequence ID" value="NC_010322.1"/>
</dbReference>
<dbReference type="SMR" id="B0KP24"/>
<dbReference type="KEGG" id="ppg:PputGB1_5199"/>
<dbReference type="eggNOG" id="COG0494">
    <property type="taxonomic scope" value="Bacteria"/>
</dbReference>
<dbReference type="HOGENOM" id="CLU_087195_3_1_6"/>
<dbReference type="Proteomes" id="UP000002157">
    <property type="component" value="Chromosome"/>
</dbReference>
<dbReference type="GO" id="GO:0005737">
    <property type="term" value="C:cytoplasm"/>
    <property type="evidence" value="ECO:0007669"/>
    <property type="project" value="TreeGrafter"/>
</dbReference>
<dbReference type="GO" id="GO:0034353">
    <property type="term" value="F:mRNA 5'-diphosphatase activity"/>
    <property type="evidence" value="ECO:0007669"/>
    <property type="project" value="TreeGrafter"/>
</dbReference>
<dbReference type="GO" id="GO:0006402">
    <property type="term" value="P:mRNA catabolic process"/>
    <property type="evidence" value="ECO:0007669"/>
    <property type="project" value="TreeGrafter"/>
</dbReference>
<dbReference type="CDD" id="cd03671">
    <property type="entry name" value="NUDIX_Ap4A_hydrolase_plant_like"/>
    <property type="match status" value="1"/>
</dbReference>
<dbReference type="FunFam" id="3.90.79.10:FF:000001">
    <property type="entry name" value="RNA pyrophosphohydrolase"/>
    <property type="match status" value="1"/>
</dbReference>
<dbReference type="Gene3D" id="3.90.79.10">
    <property type="entry name" value="Nucleoside Triphosphate Pyrophosphohydrolase"/>
    <property type="match status" value="1"/>
</dbReference>
<dbReference type="HAMAP" id="MF_00298">
    <property type="entry name" value="Nudix_RppH"/>
    <property type="match status" value="1"/>
</dbReference>
<dbReference type="InterPro" id="IPR020476">
    <property type="entry name" value="Nudix_hydrolase"/>
</dbReference>
<dbReference type="InterPro" id="IPR015797">
    <property type="entry name" value="NUDIX_hydrolase-like_dom_sf"/>
</dbReference>
<dbReference type="InterPro" id="IPR020084">
    <property type="entry name" value="NUDIX_hydrolase_CS"/>
</dbReference>
<dbReference type="InterPro" id="IPR000086">
    <property type="entry name" value="NUDIX_hydrolase_dom"/>
</dbReference>
<dbReference type="InterPro" id="IPR022927">
    <property type="entry name" value="RppH"/>
</dbReference>
<dbReference type="NCBIfam" id="NF001934">
    <property type="entry name" value="PRK00714.1-1"/>
    <property type="match status" value="1"/>
</dbReference>
<dbReference type="NCBIfam" id="NF001937">
    <property type="entry name" value="PRK00714.1-4"/>
    <property type="match status" value="1"/>
</dbReference>
<dbReference type="NCBIfam" id="NF001938">
    <property type="entry name" value="PRK00714.1-5"/>
    <property type="match status" value="1"/>
</dbReference>
<dbReference type="PANTHER" id="PTHR23114">
    <property type="entry name" value="M7GPPPN-MRNA HYDROLASE"/>
    <property type="match status" value="1"/>
</dbReference>
<dbReference type="PANTHER" id="PTHR23114:SF17">
    <property type="entry name" value="M7GPPPN-MRNA HYDROLASE"/>
    <property type="match status" value="1"/>
</dbReference>
<dbReference type="Pfam" id="PF00293">
    <property type="entry name" value="NUDIX"/>
    <property type="match status" value="1"/>
</dbReference>
<dbReference type="PRINTS" id="PR00502">
    <property type="entry name" value="NUDIXFAMILY"/>
</dbReference>
<dbReference type="SUPFAM" id="SSF55811">
    <property type="entry name" value="Nudix"/>
    <property type="match status" value="1"/>
</dbReference>
<dbReference type="PROSITE" id="PS51462">
    <property type="entry name" value="NUDIX"/>
    <property type="match status" value="1"/>
</dbReference>
<dbReference type="PROSITE" id="PS00893">
    <property type="entry name" value="NUDIX_BOX"/>
    <property type="match status" value="1"/>
</dbReference>
<reference key="1">
    <citation type="submission" date="2008-01" db="EMBL/GenBank/DDBJ databases">
        <title>Complete sequence of Pseudomonas putida GB-1.</title>
        <authorList>
            <consortium name="US DOE Joint Genome Institute"/>
            <person name="Copeland A."/>
            <person name="Lucas S."/>
            <person name="Lapidus A."/>
            <person name="Barry K."/>
            <person name="Glavina del Rio T."/>
            <person name="Dalin E."/>
            <person name="Tice H."/>
            <person name="Pitluck S."/>
            <person name="Bruce D."/>
            <person name="Goodwin L."/>
            <person name="Chertkov O."/>
            <person name="Brettin T."/>
            <person name="Detter J.C."/>
            <person name="Han C."/>
            <person name="Kuske C.R."/>
            <person name="Schmutz J."/>
            <person name="Larimer F."/>
            <person name="Land M."/>
            <person name="Hauser L."/>
            <person name="Kyrpides N."/>
            <person name="Kim E."/>
            <person name="McCarthy J.K."/>
            <person name="Richardson P."/>
        </authorList>
    </citation>
    <scope>NUCLEOTIDE SEQUENCE [LARGE SCALE GENOMIC DNA]</scope>
    <source>
        <strain>GB-1</strain>
    </source>
</reference>
<proteinExistence type="inferred from homology"/>
<comment type="function">
    <text evidence="1">Accelerates the degradation of transcripts by removing pyrophosphate from the 5'-end of triphosphorylated RNA, leading to a more labile monophosphorylated state that can stimulate subsequent ribonuclease cleavage.</text>
</comment>
<comment type="cofactor">
    <cofactor evidence="1">
        <name>a divalent metal cation</name>
        <dbReference type="ChEBI" id="CHEBI:60240"/>
    </cofactor>
</comment>
<comment type="similarity">
    <text evidence="1">Belongs to the Nudix hydrolase family. RppH subfamily.</text>
</comment>
<feature type="chain" id="PRO_1000078971" description="RNA pyrophosphohydrolase">
    <location>
        <begin position="1"/>
        <end position="159"/>
    </location>
</feature>
<feature type="domain" description="Nudix hydrolase" evidence="1">
    <location>
        <begin position="6"/>
        <end position="149"/>
    </location>
</feature>
<feature type="short sequence motif" description="Nudix box">
    <location>
        <begin position="38"/>
        <end position="59"/>
    </location>
</feature>